<reference key="1">
    <citation type="journal article" date="2006" name="PLoS Biol.">
        <title>The genome of deep-sea vent chemolithoautotroph Thiomicrospira crunogena XCL-2.</title>
        <authorList>
            <person name="Scott K.M."/>
            <person name="Sievert S.M."/>
            <person name="Abril F.N."/>
            <person name="Ball L.A."/>
            <person name="Barrett C.J."/>
            <person name="Blake R.A."/>
            <person name="Boller A.J."/>
            <person name="Chain P.S.G."/>
            <person name="Clark J.A."/>
            <person name="Davis C.R."/>
            <person name="Detter C."/>
            <person name="Do K.F."/>
            <person name="Dobrinski K.P."/>
            <person name="Faza B.I."/>
            <person name="Fitzpatrick K.A."/>
            <person name="Freyermuth S.K."/>
            <person name="Harmer T.L."/>
            <person name="Hauser L.J."/>
            <person name="Huegler M."/>
            <person name="Kerfeld C.A."/>
            <person name="Klotz M.G."/>
            <person name="Kong W.W."/>
            <person name="Land M."/>
            <person name="Lapidus A."/>
            <person name="Larimer F.W."/>
            <person name="Longo D.L."/>
            <person name="Lucas S."/>
            <person name="Malfatti S.A."/>
            <person name="Massey S.E."/>
            <person name="Martin D.D."/>
            <person name="McCuddin Z."/>
            <person name="Meyer F."/>
            <person name="Moore J.L."/>
            <person name="Ocampo L.H. Jr."/>
            <person name="Paul J.H."/>
            <person name="Paulsen I.T."/>
            <person name="Reep D.K."/>
            <person name="Ren Q."/>
            <person name="Ross R.L."/>
            <person name="Sato P.Y."/>
            <person name="Thomas P."/>
            <person name="Tinkham L.E."/>
            <person name="Zeruth G.T."/>
        </authorList>
    </citation>
    <scope>NUCLEOTIDE SEQUENCE [LARGE SCALE GENOMIC DNA]</scope>
    <source>
        <strain>DSM 25203 / XCL-2</strain>
    </source>
</reference>
<sequence length="287" mass="30885">MSAQVINGKVVAKTVIDRVKQRVQLRKSQGLRAPGLAVILIGDDPASSVYVNNKKKACEEAGLVSKSWNWPSKATQYELLELIKQLNEDTSIDGILVQLPLPDHIDAETIIEAIHPDKDVDGFHPYNIGRLTVRMPTLRPCTPYGCMNLLNHYDLSVKGKHAVIVGASNIVGRPMSLELLLAGATTTVCHRFTADLQTHVSMADILVTAVGKPNFIPADWIKPGAIVVDVGINRLPDGSLTGDVDPRAREVAAYVTPVPGGVGPMTIATLLENTLKACEIHQLGAVS</sequence>
<gene>
    <name evidence="1" type="primary">folD2</name>
    <name type="ordered locus">Tcr_1343</name>
</gene>
<evidence type="ECO:0000255" key="1">
    <source>
        <dbReference type="HAMAP-Rule" id="MF_01576"/>
    </source>
</evidence>
<dbReference type="EC" id="1.5.1.5" evidence="1"/>
<dbReference type="EC" id="3.5.4.9" evidence="1"/>
<dbReference type="EMBL" id="CP000109">
    <property type="protein sequence ID" value="ABB41938.1"/>
    <property type="molecule type" value="Genomic_DNA"/>
</dbReference>
<dbReference type="SMR" id="Q31FY5"/>
<dbReference type="STRING" id="317025.Tcr_1343"/>
<dbReference type="KEGG" id="tcx:Tcr_1343"/>
<dbReference type="eggNOG" id="COG0190">
    <property type="taxonomic scope" value="Bacteria"/>
</dbReference>
<dbReference type="HOGENOM" id="CLU_034045_2_1_6"/>
<dbReference type="OrthoDB" id="9803580at2"/>
<dbReference type="UniPathway" id="UPA00193"/>
<dbReference type="GO" id="GO:0005829">
    <property type="term" value="C:cytosol"/>
    <property type="evidence" value="ECO:0007669"/>
    <property type="project" value="TreeGrafter"/>
</dbReference>
<dbReference type="GO" id="GO:0004477">
    <property type="term" value="F:methenyltetrahydrofolate cyclohydrolase activity"/>
    <property type="evidence" value="ECO:0007669"/>
    <property type="project" value="UniProtKB-UniRule"/>
</dbReference>
<dbReference type="GO" id="GO:0004488">
    <property type="term" value="F:methylenetetrahydrofolate dehydrogenase (NADP+) activity"/>
    <property type="evidence" value="ECO:0007669"/>
    <property type="project" value="UniProtKB-UniRule"/>
</dbReference>
<dbReference type="GO" id="GO:0000105">
    <property type="term" value="P:L-histidine biosynthetic process"/>
    <property type="evidence" value="ECO:0007669"/>
    <property type="project" value="UniProtKB-KW"/>
</dbReference>
<dbReference type="GO" id="GO:0009086">
    <property type="term" value="P:methionine biosynthetic process"/>
    <property type="evidence" value="ECO:0007669"/>
    <property type="project" value="UniProtKB-KW"/>
</dbReference>
<dbReference type="GO" id="GO:0006164">
    <property type="term" value="P:purine nucleotide biosynthetic process"/>
    <property type="evidence" value="ECO:0007669"/>
    <property type="project" value="UniProtKB-KW"/>
</dbReference>
<dbReference type="GO" id="GO:0035999">
    <property type="term" value="P:tetrahydrofolate interconversion"/>
    <property type="evidence" value="ECO:0007669"/>
    <property type="project" value="UniProtKB-UniRule"/>
</dbReference>
<dbReference type="CDD" id="cd01080">
    <property type="entry name" value="NAD_bind_m-THF_DH_Cyclohyd"/>
    <property type="match status" value="1"/>
</dbReference>
<dbReference type="FunFam" id="3.40.50.10860:FF:000001">
    <property type="entry name" value="Bifunctional protein FolD"/>
    <property type="match status" value="1"/>
</dbReference>
<dbReference type="FunFam" id="3.40.50.720:FF:000094">
    <property type="entry name" value="Bifunctional protein FolD"/>
    <property type="match status" value="1"/>
</dbReference>
<dbReference type="Gene3D" id="3.40.50.10860">
    <property type="entry name" value="Leucine Dehydrogenase, chain A, domain 1"/>
    <property type="match status" value="1"/>
</dbReference>
<dbReference type="Gene3D" id="3.40.50.720">
    <property type="entry name" value="NAD(P)-binding Rossmann-like Domain"/>
    <property type="match status" value="1"/>
</dbReference>
<dbReference type="HAMAP" id="MF_01576">
    <property type="entry name" value="THF_DHG_CYH"/>
    <property type="match status" value="1"/>
</dbReference>
<dbReference type="InterPro" id="IPR046346">
    <property type="entry name" value="Aminoacid_DH-like_N_sf"/>
</dbReference>
<dbReference type="InterPro" id="IPR036291">
    <property type="entry name" value="NAD(P)-bd_dom_sf"/>
</dbReference>
<dbReference type="InterPro" id="IPR000672">
    <property type="entry name" value="THF_DH/CycHdrlase"/>
</dbReference>
<dbReference type="InterPro" id="IPR020630">
    <property type="entry name" value="THF_DH/CycHdrlase_cat_dom"/>
</dbReference>
<dbReference type="InterPro" id="IPR020867">
    <property type="entry name" value="THF_DH/CycHdrlase_CS"/>
</dbReference>
<dbReference type="InterPro" id="IPR020631">
    <property type="entry name" value="THF_DH/CycHdrlase_NAD-bd_dom"/>
</dbReference>
<dbReference type="NCBIfam" id="NF008058">
    <property type="entry name" value="PRK10792.1"/>
    <property type="match status" value="1"/>
</dbReference>
<dbReference type="NCBIfam" id="NF010783">
    <property type="entry name" value="PRK14186.1"/>
    <property type="match status" value="1"/>
</dbReference>
<dbReference type="PANTHER" id="PTHR48099:SF5">
    <property type="entry name" value="C-1-TETRAHYDROFOLATE SYNTHASE, CYTOPLASMIC"/>
    <property type="match status" value="1"/>
</dbReference>
<dbReference type="PANTHER" id="PTHR48099">
    <property type="entry name" value="C-1-TETRAHYDROFOLATE SYNTHASE, CYTOPLASMIC-RELATED"/>
    <property type="match status" value="1"/>
</dbReference>
<dbReference type="Pfam" id="PF00763">
    <property type="entry name" value="THF_DHG_CYH"/>
    <property type="match status" value="1"/>
</dbReference>
<dbReference type="Pfam" id="PF02882">
    <property type="entry name" value="THF_DHG_CYH_C"/>
    <property type="match status" value="1"/>
</dbReference>
<dbReference type="PRINTS" id="PR00085">
    <property type="entry name" value="THFDHDRGNASE"/>
</dbReference>
<dbReference type="SUPFAM" id="SSF53223">
    <property type="entry name" value="Aminoacid dehydrogenase-like, N-terminal domain"/>
    <property type="match status" value="1"/>
</dbReference>
<dbReference type="SUPFAM" id="SSF51735">
    <property type="entry name" value="NAD(P)-binding Rossmann-fold domains"/>
    <property type="match status" value="1"/>
</dbReference>
<dbReference type="PROSITE" id="PS00766">
    <property type="entry name" value="THF_DHG_CYH_1"/>
    <property type="match status" value="1"/>
</dbReference>
<dbReference type="PROSITE" id="PS00767">
    <property type="entry name" value="THF_DHG_CYH_2"/>
    <property type="match status" value="1"/>
</dbReference>
<organism>
    <name type="scientific">Hydrogenovibrio crunogenus (strain DSM 25203 / XCL-2)</name>
    <name type="common">Thiomicrospira crunogena</name>
    <dbReference type="NCBI Taxonomy" id="317025"/>
    <lineage>
        <taxon>Bacteria</taxon>
        <taxon>Pseudomonadati</taxon>
        <taxon>Pseudomonadota</taxon>
        <taxon>Gammaproteobacteria</taxon>
        <taxon>Thiotrichales</taxon>
        <taxon>Piscirickettsiaceae</taxon>
        <taxon>Hydrogenovibrio</taxon>
    </lineage>
</organism>
<keyword id="KW-0028">Amino-acid biosynthesis</keyword>
<keyword id="KW-0368">Histidine biosynthesis</keyword>
<keyword id="KW-0378">Hydrolase</keyword>
<keyword id="KW-0486">Methionine biosynthesis</keyword>
<keyword id="KW-0511">Multifunctional enzyme</keyword>
<keyword id="KW-0521">NADP</keyword>
<keyword id="KW-0554">One-carbon metabolism</keyword>
<keyword id="KW-0560">Oxidoreductase</keyword>
<keyword id="KW-0658">Purine biosynthesis</keyword>
<comment type="function">
    <text evidence="1">Catalyzes the oxidation of 5,10-methylenetetrahydrofolate to 5,10-methenyltetrahydrofolate and then the hydrolysis of 5,10-methenyltetrahydrofolate to 10-formyltetrahydrofolate.</text>
</comment>
<comment type="catalytic activity">
    <reaction evidence="1">
        <text>(6R)-5,10-methylene-5,6,7,8-tetrahydrofolate + NADP(+) = (6R)-5,10-methenyltetrahydrofolate + NADPH</text>
        <dbReference type="Rhea" id="RHEA:22812"/>
        <dbReference type="ChEBI" id="CHEBI:15636"/>
        <dbReference type="ChEBI" id="CHEBI:57455"/>
        <dbReference type="ChEBI" id="CHEBI:57783"/>
        <dbReference type="ChEBI" id="CHEBI:58349"/>
        <dbReference type="EC" id="1.5.1.5"/>
    </reaction>
</comment>
<comment type="catalytic activity">
    <reaction evidence="1">
        <text>(6R)-5,10-methenyltetrahydrofolate + H2O = (6R)-10-formyltetrahydrofolate + H(+)</text>
        <dbReference type="Rhea" id="RHEA:23700"/>
        <dbReference type="ChEBI" id="CHEBI:15377"/>
        <dbReference type="ChEBI" id="CHEBI:15378"/>
        <dbReference type="ChEBI" id="CHEBI:57455"/>
        <dbReference type="ChEBI" id="CHEBI:195366"/>
        <dbReference type="EC" id="3.5.4.9"/>
    </reaction>
</comment>
<comment type="pathway">
    <text evidence="1">One-carbon metabolism; tetrahydrofolate interconversion.</text>
</comment>
<comment type="subunit">
    <text evidence="1">Homodimer.</text>
</comment>
<comment type="similarity">
    <text evidence="1">Belongs to the tetrahydrofolate dehydrogenase/cyclohydrolase family.</text>
</comment>
<feature type="chain" id="PRO_0000268549" description="Bifunctional protein FolD 2">
    <location>
        <begin position="1"/>
        <end position="287"/>
    </location>
</feature>
<feature type="binding site" evidence="1">
    <location>
        <begin position="166"/>
        <end position="168"/>
    </location>
    <ligand>
        <name>NADP(+)</name>
        <dbReference type="ChEBI" id="CHEBI:58349"/>
    </ligand>
</feature>
<feature type="binding site" evidence="1">
    <location>
        <position position="232"/>
    </location>
    <ligand>
        <name>NADP(+)</name>
        <dbReference type="ChEBI" id="CHEBI:58349"/>
    </ligand>
</feature>
<proteinExistence type="inferred from homology"/>
<name>FOLD2_HYDCU</name>
<accession>Q31FY5</accession>
<protein>
    <recommendedName>
        <fullName evidence="1">Bifunctional protein FolD 2</fullName>
    </recommendedName>
    <domain>
        <recommendedName>
            <fullName evidence="1">Methylenetetrahydrofolate dehydrogenase</fullName>
            <ecNumber evidence="1">1.5.1.5</ecNumber>
        </recommendedName>
    </domain>
    <domain>
        <recommendedName>
            <fullName evidence="1">Methenyltetrahydrofolate cyclohydrolase</fullName>
            <ecNumber evidence="1">3.5.4.9</ecNumber>
        </recommendedName>
    </domain>
</protein>